<reference key="1">
    <citation type="journal article" date="2003" name="Nature">
        <title>Genome divergence in two Prochlorococcus ecotypes reflects oceanic niche differentiation.</title>
        <authorList>
            <person name="Rocap G."/>
            <person name="Larimer F.W."/>
            <person name="Lamerdin J.E."/>
            <person name="Malfatti S."/>
            <person name="Chain P."/>
            <person name="Ahlgren N.A."/>
            <person name="Arellano A."/>
            <person name="Coleman M."/>
            <person name="Hauser L."/>
            <person name="Hess W.R."/>
            <person name="Johnson Z.I."/>
            <person name="Land M.L."/>
            <person name="Lindell D."/>
            <person name="Post A.F."/>
            <person name="Regala W."/>
            <person name="Shah M."/>
            <person name="Shaw S.L."/>
            <person name="Steglich C."/>
            <person name="Sullivan M.B."/>
            <person name="Ting C.S."/>
            <person name="Tolonen A."/>
            <person name="Webb E.A."/>
            <person name="Zinser E.R."/>
            <person name="Chisholm S.W."/>
        </authorList>
    </citation>
    <scope>NUCLEOTIDE SEQUENCE [LARGE SCALE GENOMIC DNA]</scope>
    <source>
        <strain>CCMP1986 / NIES-2087 / MED4</strain>
    </source>
</reference>
<name>RL23_PROMP</name>
<gene>
    <name evidence="1" type="primary">rplW</name>
    <name evidence="1" type="synonym">rpl23</name>
    <name type="ordered locus">PMM1556</name>
</gene>
<evidence type="ECO:0000255" key="1">
    <source>
        <dbReference type="HAMAP-Rule" id="MF_01369"/>
    </source>
</evidence>
<evidence type="ECO:0000305" key="2"/>
<comment type="function">
    <text evidence="1">One of the early assembly proteins it binds 23S rRNA. One of the proteins that surrounds the polypeptide exit tunnel on the outside of the ribosome. Forms the main docking site for trigger factor binding to the ribosome.</text>
</comment>
<comment type="subunit">
    <text evidence="1">Part of the 50S ribosomal subunit. Contacts protein L29, and trigger factor when it is bound to the ribosome.</text>
</comment>
<comment type="similarity">
    <text evidence="1">Belongs to the universal ribosomal protein uL23 family.</text>
</comment>
<feature type="chain" id="PRO_0000272800" description="Large ribosomal subunit protein uL23">
    <location>
        <begin position="1"/>
        <end position="100"/>
    </location>
</feature>
<accession>Q7UZU9</accession>
<sequence>MSRLFDSRLADIIRKPVITEKATNALDLNQYTFEVDHRAAKPQIKAAIEALFDVKVIGINTMNPPRRTRRVGKFSGKRSQIKKAIVRLAEGDKIQLFPES</sequence>
<proteinExistence type="inferred from homology"/>
<protein>
    <recommendedName>
        <fullName evidence="1">Large ribosomal subunit protein uL23</fullName>
    </recommendedName>
    <alternativeName>
        <fullName evidence="2">50S ribosomal protein L23</fullName>
    </alternativeName>
</protein>
<keyword id="KW-0687">Ribonucleoprotein</keyword>
<keyword id="KW-0689">Ribosomal protein</keyword>
<keyword id="KW-0694">RNA-binding</keyword>
<keyword id="KW-0699">rRNA-binding</keyword>
<organism>
    <name type="scientific">Prochlorococcus marinus subsp. pastoris (strain CCMP1986 / NIES-2087 / MED4)</name>
    <dbReference type="NCBI Taxonomy" id="59919"/>
    <lineage>
        <taxon>Bacteria</taxon>
        <taxon>Bacillati</taxon>
        <taxon>Cyanobacteriota</taxon>
        <taxon>Cyanophyceae</taxon>
        <taxon>Synechococcales</taxon>
        <taxon>Prochlorococcaceae</taxon>
        <taxon>Prochlorococcus</taxon>
    </lineage>
</organism>
<dbReference type="EMBL" id="BX548174">
    <property type="protein sequence ID" value="CAE20015.1"/>
    <property type="molecule type" value="Genomic_DNA"/>
</dbReference>
<dbReference type="RefSeq" id="WP_011133184.1">
    <property type="nucleotide sequence ID" value="NC_005072.1"/>
</dbReference>
<dbReference type="SMR" id="Q7UZU9"/>
<dbReference type="STRING" id="59919.PMM1556"/>
<dbReference type="KEGG" id="pmm:PMM1556"/>
<dbReference type="eggNOG" id="COG0089">
    <property type="taxonomic scope" value="Bacteria"/>
</dbReference>
<dbReference type="HOGENOM" id="CLU_037562_3_2_3"/>
<dbReference type="OrthoDB" id="9793353at2"/>
<dbReference type="Proteomes" id="UP000001026">
    <property type="component" value="Chromosome"/>
</dbReference>
<dbReference type="GO" id="GO:1990904">
    <property type="term" value="C:ribonucleoprotein complex"/>
    <property type="evidence" value="ECO:0007669"/>
    <property type="project" value="UniProtKB-KW"/>
</dbReference>
<dbReference type="GO" id="GO:0005840">
    <property type="term" value="C:ribosome"/>
    <property type="evidence" value="ECO:0007669"/>
    <property type="project" value="UniProtKB-KW"/>
</dbReference>
<dbReference type="GO" id="GO:0019843">
    <property type="term" value="F:rRNA binding"/>
    <property type="evidence" value="ECO:0007669"/>
    <property type="project" value="UniProtKB-UniRule"/>
</dbReference>
<dbReference type="GO" id="GO:0003735">
    <property type="term" value="F:structural constituent of ribosome"/>
    <property type="evidence" value="ECO:0007669"/>
    <property type="project" value="InterPro"/>
</dbReference>
<dbReference type="GO" id="GO:0006412">
    <property type="term" value="P:translation"/>
    <property type="evidence" value="ECO:0007669"/>
    <property type="project" value="UniProtKB-UniRule"/>
</dbReference>
<dbReference type="FunFam" id="3.30.70.330:FF:000001">
    <property type="entry name" value="50S ribosomal protein L23"/>
    <property type="match status" value="1"/>
</dbReference>
<dbReference type="Gene3D" id="3.30.70.330">
    <property type="match status" value="1"/>
</dbReference>
<dbReference type="HAMAP" id="MF_01369_B">
    <property type="entry name" value="Ribosomal_uL23_B"/>
    <property type="match status" value="1"/>
</dbReference>
<dbReference type="InterPro" id="IPR012677">
    <property type="entry name" value="Nucleotide-bd_a/b_plait_sf"/>
</dbReference>
<dbReference type="InterPro" id="IPR013025">
    <property type="entry name" value="Ribosomal_uL23-like"/>
</dbReference>
<dbReference type="InterPro" id="IPR012678">
    <property type="entry name" value="Ribosomal_uL23/eL15/eS24_sf"/>
</dbReference>
<dbReference type="InterPro" id="IPR001014">
    <property type="entry name" value="Ribosomal_uL23_CS"/>
</dbReference>
<dbReference type="NCBIfam" id="NF004363">
    <property type="entry name" value="PRK05738.2-4"/>
    <property type="match status" value="1"/>
</dbReference>
<dbReference type="NCBIfam" id="NF004365">
    <property type="entry name" value="PRK05738.3-1"/>
    <property type="match status" value="1"/>
</dbReference>
<dbReference type="NCBIfam" id="NF004366">
    <property type="entry name" value="PRK05738.3-2"/>
    <property type="match status" value="1"/>
</dbReference>
<dbReference type="NCBIfam" id="NF004368">
    <property type="entry name" value="PRK05738.3-4"/>
    <property type="match status" value="1"/>
</dbReference>
<dbReference type="PANTHER" id="PTHR11620">
    <property type="entry name" value="60S RIBOSOMAL PROTEIN L23A"/>
    <property type="match status" value="1"/>
</dbReference>
<dbReference type="Pfam" id="PF00276">
    <property type="entry name" value="Ribosomal_L23"/>
    <property type="match status" value="1"/>
</dbReference>
<dbReference type="SUPFAM" id="SSF54189">
    <property type="entry name" value="Ribosomal proteins S24e, L23 and L15e"/>
    <property type="match status" value="1"/>
</dbReference>
<dbReference type="PROSITE" id="PS00050">
    <property type="entry name" value="RIBOSOMAL_L23"/>
    <property type="match status" value="1"/>
</dbReference>